<evidence type="ECO:0000255" key="1"/>
<evidence type="ECO:0000305" key="2"/>
<proteinExistence type="predicted"/>
<keyword id="KW-1003">Cell membrane</keyword>
<keyword id="KW-0472">Membrane</keyword>
<keyword id="KW-1185">Reference proteome</keyword>
<keyword id="KW-0812">Transmembrane</keyword>
<keyword id="KW-1133">Transmembrane helix</keyword>
<gene>
    <name type="ordered locus">MT1460</name>
</gene>
<name>Y1417_MYCTO</name>
<dbReference type="EMBL" id="AE000516">
    <property type="protein sequence ID" value="AAK45725.1"/>
    <property type="molecule type" value="Genomic_DNA"/>
</dbReference>
<dbReference type="PIR" id="F70902">
    <property type="entry name" value="F70902"/>
</dbReference>
<dbReference type="RefSeq" id="WP_003407340.1">
    <property type="nucleotide sequence ID" value="NZ_KK341227.1"/>
</dbReference>
<dbReference type="KEGG" id="mtc:MT1460"/>
<dbReference type="PATRIC" id="fig|83331.31.peg.1569"/>
<dbReference type="HOGENOM" id="CLU_110740_1_0_11"/>
<dbReference type="Proteomes" id="UP000001020">
    <property type="component" value="Chromosome"/>
</dbReference>
<dbReference type="GO" id="GO:0005886">
    <property type="term" value="C:plasma membrane"/>
    <property type="evidence" value="ECO:0007669"/>
    <property type="project" value="UniProtKB-SubCell"/>
</dbReference>
<dbReference type="InterPro" id="IPR019692">
    <property type="entry name" value="CFP-6_PH"/>
</dbReference>
<dbReference type="Pfam" id="PF10756">
    <property type="entry name" value="bPH_6"/>
    <property type="match status" value="1"/>
</dbReference>
<sequence length="154" mass="16383">MTAAPNDWDVVLRPHWTPLFAYAAAFLIAVAHVAGGLLLKVGSSGVVFQTADQVAMGALGLVLAGAVLLFARPRLRVGSAGLSVRNLLGDRIVGWSEVIGVSFPGGSRWARIDLADDEYIPVMAIQAVDKDRAVAAMDTVRSLLARYRPDLCAR</sequence>
<comment type="subcellular location">
    <subcellularLocation>
        <location evidence="2">Cell membrane</location>
        <topology evidence="2">Multi-pass membrane protein</topology>
    </subcellularLocation>
</comment>
<accession>P9WLY0</accession>
<accession>L0T6L1</accession>
<accession>P64847</accession>
<accession>P71686</accession>
<protein>
    <recommendedName>
        <fullName>Uncharacterized protein MT1460</fullName>
    </recommendedName>
</protein>
<organism>
    <name type="scientific">Mycobacterium tuberculosis (strain CDC 1551 / Oshkosh)</name>
    <dbReference type="NCBI Taxonomy" id="83331"/>
    <lineage>
        <taxon>Bacteria</taxon>
        <taxon>Bacillati</taxon>
        <taxon>Actinomycetota</taxon>
        <taxon>Actinomycetes</taxon>
        <taxon>Mycobacteriales</taxon>
        <taxon>Mycobacteriaceae</taxon>
        <taxon>Mycobacterium</taxon>
        <taxon>Mycobacterium tuberculosis complex</taxon>
    </lineage>
</organism>
<feature type="chain" id="PRO_0000427400" description="Uncharacterized protein MT1460">
    <location>
        <begin position="1"/>
        <end position="154"/>
    </location>
</feature>
<feature type="transmembrane region" description="Helical" evidence="1">
    <location>
        <begin position="19"/>
        <end position="39"/>
    </location>
</feature>
<feature type="transmembrane region" description="Helical" evidence="1">
    <location>
        <begin position="51"/>
        <end position="71"/>
    </location>
</feature>
<reference key="1">
    <citation type="journal article" date="2002" name="J. Bacteriol.">
        <title>Whole-genome comparison of Mycobacterium tuberculosis clinical and laboratory strains.</title>
        <authorList>
            <person name="Fleischmann R.D."/>
            <person name="Alland D."/>
            <person name="Eisen J.A."/>
            <person name="Carpenter L."/>
            <person name="White O."/>
            <person name="Peterson J.D."/>
            <person name="DeBoy R.T."/>
            <person name="Dodson R.J."/>
            <person name="Gwinn M.L."/>
            <person name="Haft D.H."/>
            <person name="Hickey E.K."/>
            <person name="Kolonay J.F."/>
            <person name="Nelson W.C."/>
            <person name="Umayam L.A."/>
            <person name="Ermolaeva M.D."/>
            <person name="Salzberg S.L."/>
            <person name="Delcher A."/>
            <person name="Utterback T.R."/>
            <person name="Weidman J.F."/>
            <person name="Khouri H.M."/>
            <person name="Gill J."/>
            <person name="Mikula A."/>
            <person name="Bishai W."/>
            <person name="Jacobs W.R. Jr."/>
            <person name="Venter J.C."/>
            <person name="Fraser C.M."/>
        </authorList>
    </citation>
    <scope>NUCLEOTIDE SEQUENCE [LARGE SCALE GENOMIC DNA]</scope>
    <source>
        <strain>CDC 1551 / Oshkosh</strain>
    </source>
</reference>